<organism>
    <name type="scientific">Candida albicans (strain WO-1)</name>
    <name type="common">Yeast</name>
    <dbReference type="NCBI Taxonomy" id="294748"/>
    <lineage>
        <taxon>Eukaryota</taxon>
        <taxon>Fungi</taxon>
        <taxon>Dikarya</taxon>
        <taxon>Ascomycota</taxon>
        <taxon>Saccharomycotina</taxon>
        <taxon>Pichiomycetes</taxon>
        <taxon>Debaryomycetaceae</taxon>
        <taxon>Candida/Lodderomyces clade</taxon>
        <taxon>Candida</taxon>
    </lineage>
</organism>
<dbReference type="EMBL" id="M88113">
    <property type="protein sequence ID" value="AAA34324.2"/>
    <property type="molecule type" value="Genomic_DNA"/>
</dbReference>
<dbReference type="EMBL" id="CM000311">
    <property type="protein sequence ID" value="EEQ46533.1"/>
    <property type="molecule type" value="Genomic_DNA"/>
</dbReference>
<dbReference type="PIR" id="A44384">
    <property type="entry name" value="A44384"/>
</dbReference>
<dbReference type="SMR" id="P28868"/>
<dbReference type="PaxDb" id="5476-P28868"/>
<dbReference type="VEuPathDB" id="FungiDB:CAWG_04888"/>
<dbReference type="HOGENOM" id="CLU_014184_6_0_1"/>
<dbReference type="OMA" id="QVIWADA"/>
<dbReference type="OrthoDB" id="1955at766764"/>
<dbReference type="Proteomes" id="UP000001429">
    <property type="component" value="Chromosome 5"/>
</dbReference>
<dbReference type="GO" id="GO:0005737">
    <property type="term" value="C:cytoplasm"/>
    <property type="evidence" value="ECO:0007669"/>
    <property type="project" value="TreeGrafter"/>
</dbReference>
<dbReference type="GO" id="GO:0005834">
    <property type="term" value="C:heterotrimeric G-protein complex"/>
    <property type="evidence" value="ECO:0007669"/>
    <property type="project" value="InterPro"/>
</dbReference>
<dbReference type="GO" id="GO:0001664">
    <property type="term" value="F:G protein-coupled receptor binding"/>
    <property type="evidence" value="ECO:0007669"/>
    <property type="project" value="InterPro"/>
</dbReference>
<dbReference type="GO" id="GO:0031683">
    <property type="term" value="F:G-protein beta/gamma-subunit complex binding"/>
    <property type="evidence" value="ECO:0007669"/>
    <property type="project" value="InterPro"/>
</dbReference>
<dbReference type="GO" id="GO:0005525">
    <property type="term" value="F:GTP binding"/>
    <property type="evidence" value="ECO:0007669"/>
    <property type="project" value="UniProtKB-KW"/>
</dbReference>
<dbReference type="GO" id="GO:0003924">
    <property type="term" value="F:GTPase activity"/>
    <property type="evidence" value="ECO:0007669"/>
    <property type="project" value="InterPro"/>
</dbReference>
<dbReference type="GO" id="GO:0046872">
    <property type="term" value="F:metal ion binding"/>
    <property type="evidence" value="ECO:0007669"/>
    <property type="project" value="UniProtKB-KW"/>
</dbReference>
<dbReference type="GO" id="GO:0007186">
    <property type="term" value="P:G protein-coupled receptor signaling pathway"/>
    <property type="evidence" value="ECO:0007669"/>
    <property type="project" value="InterPro"/>
</dbReference>
<dbReference type="GO" id="GO:0000750">
    <property type="term" value="P:pheromone-dependent signal transduction involved in conjugation with cellular fusion"/>
    <property type="evidence" value="ECO:0007669"/>
    <property type="project" value="TreeGrafter"/>
</dbReference>
<dbReference type="CDD" id="cd00066">
    <property type="entry name" value="G-alpha"/>
    <property type="match status" value="1"/>
</dbReference>
<dbReference type="FunFam" id="1.10.400.10:FF:000015">
    <property type="entry name" value="G protein alpha subunit"/>
    <property type="match status" value="1"/>
</dbReference>
<dbReference type="FunFam" id="3.40.50.300:FF:000563">
    <property type="entry name" value="Guanine nucleotide-binding protein alpha subunit"/>
    <property type="match status" value="1"/>
</dbReference>
<dbReference type="Gene3D" id="3.40.50.300">
    <property type="entry name" value="P-loop containing nucleotide triphosphate hydrolases"/>
    <property type="match status" value="2"/>
</dbReference>
<dbReference type="InterPro" id="IPR002975">
    <property type="entry name" value="Fungi_Gprotein_alpha"/>
</dbReference>
<dbReference type="InterPro" id="IPR001019">
    <property type="entry name" value="Gprotein_alpha_su"/>
</dbReference>
<dbReference type="InterPro" id="IPR011025">
    <property type="entry name" value="GproteinA_insert"/>
</dbReference>
<dbReference type="InterPro" id="IPR027417">
    <property type="entry name" value="P-loop_NTPase"/>
</dbReference>
<dbReference type="PANTHER" id="PTHR10218">
    <property type="entry name" value="GTP-BINDING PROTEIN ALPHA SUBUNIT"/>
    <property type="match status" value="1"/>
</dbReference>
<dbReference type="PANTHER" id="PTHR10218:SF302">
    <property type="entry name" value="GUANINE NUCLEOTIDE-BINDING PROTEIN ALPHA-5 SUBUNIT"/>
    <property type="match status" value="1"/>
</dbReference>
<dbReference type="Pfam" id="PF00503">
    <property type="entry name" value="G-alpha"/>
    <property type="match status" value="1"/>
</dbReference>
<dbReference type="PRINTS" id="PR00318">
    <property type="entry name" value="GPROTEINA"/>
</dbReference>
<dbReference type="PRINTS" id="PR01241">
    <property type="entry name" value="GPROTEINAFNG"/>
</dbReference>
<dbReference type="SMART" id="SM00275">
    <property type="entry name" value="G_alpha"/>
    <property type="match status" value="1"/>
</dbReference>
<dbReference type="SUPFAM" id="SSF52540">
    <property type="entry name" value="P-loop containing nucleoside triphosphate hydrolases"/>
    <property type="match status" value="1"/>
</dbReference>
<dbReference type="SUPFAM" id="SSF47895">
    <property type="entry name" value="Transducin (alpha subunit), insertion domain"/>
    <property type="match status" value="1"/>
</dbReference>
<dbReference type="PROSITE" id="PS51882">
    <property type="entry name" value="G_ALPHA"/>
    <property type="match status" value="1"/>
</dbReference>
<accession>P28868</accession>
<accession>C4YS30</accession>
<gene>
    <name type="primary">CAG1</name>
    <name type="ORF">CAWG_04888</name>
</gene>
<keyword id="KW-0342">GTP-binding</keyword>
<keyword id="KW-0378">Hydrolase</keyword>
<keyword id="KW-0449">Lipoprotein</keyword>
<keyword id="KW-0460">Magnesium</keyword>
<keyword id="KW-0479">Metal-binding</keyword>
<keyword id="KW-0519">Myristate</keyword>
<keyword id="KW-0547">Nucleotide-binding</keyword>
<keyword id="KW-0564">Palmitate</keyword>
<keyword id="KW-0807">Transducer</keyword>
<name>GPA1_CANAW</name>
<sequence length="429" mass="49203">MGCGASVPVDDDEIDPFLQDKRINDAIEQSLQLRQQNSKKGVKLLLLGAGESGKSTVLKQLKLLHKGGFTQQERRQYSHVIWCDVIQSMKVLIIQARKLKIKLDCDQPNNSLIPYKQIILRSDPLKQIDADVAGGTDFLNDFVVKYSEENKNKRRLKSTGTTDIWGKDDDSNINSDAINQALESSLNKDSEQFTRLSIAEAIHKLWKLDSGIKKCFDRSNEFQLEGSADYYFDNVFNFADTNYLSTDLDILKGRIKTTGITETDFLIKSFQFKVLDAGGQRSERKKWIHCFEDITAVLFVLAISEYDQNLFEDERVNRMHESIVLFDSLCNSKWFANTPFILFLNKIDIFENKIKKNPLKNYFPDYDGKPDDTNEAIKFFETNFLKINQTNKPIYVHRTCATDSKSMKFVLSAVTDMIVQQNLKKSGIM</sequence>
<feature type="initiator methionine" description="Removed" evidence="1">
    <location>
        <position position="1"/>
    </location>
</feature>
<feature type="chain" id="PRO_0000203595" description="Guanine nucleotide-binding protein subunit alpha">
    <location>
        <begin position="2"/>
        <end position="429"/>
    </location>
</feature>
<feature type="domain" description="G-alpha" evidence="4">
    <location>
        <begin position="40"/>
        <end position="429"/>
    </location>
</feature>
<feature type="region of interest" description="G1 motif" evidence="4">
    <location>
        <begin position="43"/>
        <end position="56"/>
    </location>
</feature>
<feature type="region of interest" description="Not present in other G-proteins">
    <location>
        <begin position="125"/>
        <end position="197"/>
    </location>
</feature>
<feature type="region of interest" description="G2 motif" evidence="4">
    <location>
        <begin position="249"/>
        <end position="257"/>
    </location>
</feature>
<feature type="region of interest" description="G3 motif" evidence="4">
    <location>
        <begin position="272"/>
        <end position="281"/>
    </location>
</feature>
<feature type="region of interest" description="G4 motif" evidence="4">
    <location>
        <begin position="341"/>
        <end position="348"/>
    </location>
</feature>
<feature type="region of interest" description="G5 motif" evidence="4">
    <location>
        <begin position="399"/>
        <end position="404"/>
    </location>
</feature>
<feature type="binding site" evidence="3">
    <location>
        <position position="51"/>
    </location>
    <ligand>
        <name>GTP</name>
        <dbReference type="ChEBI" id="CHEBI:37565"/>
    </ligand>
</feature>
<feature type="binding site" evidence="3">
    <location>
        <position position="52"/>
    </location>
    <ligand>
        <name>GTP</name>
        <dbReference type="ChEBI" id="CHEBI:37565"/>
    </ligand>
</feature>
<feature type="binding site" evidence="3">
    <location>
        <position position="53"/>
    </location>
    <ligand>
        <name>GTP</name>
        <dbReference type="ChEBI" id="CHEBI:37565"/>
    </ligand>
</feature>
<feature type="binding site" evidence="3">
    <location>
        <position position="54"/>
    </location>
    <ligand>
        <name>GTP</name>
        <dbReference type="ChEBI" id="CHEBI:37565"/>
    </ligand>
</feature>
<feature type="binding site" evidence="3">
    <location>
        <position position="55"/>
    </location>
    <ligand>
        <name>GTP</name>
        <dbReference type="ChEBI" id="CHEBI:37565"/>
    </ligand>
</feature>
<feature type="binding site" evidence="4">
    <location>
        <position position="55"/>
    </location>
    <ligand>
        <name>Mg(2+)</name>
        <dbReference type="ChEBI" id="CHEBI:18420"/>
    </ligand>
</feature>
<feature type="binding site" evidence="3">
    <location>
        <position position="56"/>
    </location>
    <ligand>
        <name>GTP</name>
        <dbReference type="ChEBI" id="CHEBI:37565"/>
    </ligand>
</feature>
<feature type="binding site" evidence="3">
    <location>
        <position position="251"/>
    </location>
    <ligand>
        <name>GTP</name>
        <dbReference type="ChEBI" id="CHEBI:37565"/>
    </ligand>
</feature>
<feature type="binding site" evidence="3">
    <location>
        <position position="257"/>
    </location>
    <ligand>
        <name>GTP</name>
        <dbReference type="ChEBI" id="CHEBI:37565"/>
    </ligand>
</feature>
<feature type="binding site" evidence="4">
    <location>
        <position position="257"/>
    </location>
    <ligand>
        <name>Mg(2+)</name>
        <dbReference type="ChEBI" id="CHEBI:18420"/>
    </ligand>
</feature>
<feature type="binding site" evidence="3">
    <location>
        <position position="279"/>
    </location>
    <ligand>
        <name>GTP</name>
        <dbReference type="ChEBI" id="CHEBI:37565"/>
    </ligand>
</feature>
<feature type="binding site" evidence="3">
    <location>
        <position position="345"/>
    </location>
    <ligand>
        <name>GTP</name>
        <dbReference type="ChEBI" id="CHEBI:37565"/>
    </ligand>
</feature>
<feature type="binding site" evidence="3">
    <location>
        <position position="346"/>
    </location>
    <ligand>
        <name>GTP</name>
        <dbReference type="ChEBI" id="CHEBI:37565"/>
    </ligand>
</feature>
<feature type="binding site" evidence="3">
    <location>
        <position position="348"/>
    </location>
    <ligand>
        <name>GTP</name>
        <dbReference type="ChEBI" id="CHEBI:37565"/>
    </ligand>
</feature>
<feature type="binding site" evidence="3">
    <location>
        <position position="401"/>
    </location>
    <ligand>
        <name>GTP</name>
        <dbReference type="ChEBI" id="CHEBI:37565"/>
    </ligand>
</feature>
<feature type="lipid moiety-binding region" description="N-myristoyl glycine" evidence="2">
    <location>
        <position position="2"/>
    </location>
</feature>
<feature type="lipid moiety-binding region" description="S-palmitoyl cysteine" evidence="2">
    <location>
        <position position="3"/>
    </location>
</feature>
<feature type="sequence conflict" description="In Ref. 1; AAA34324." evidence="5" ref="1">
    <original>D</original>
    <variation>S</variation>
    <location>
        <position position="131"/>
    </location>
</feature>
<feature type="sequence conflict" description="In Ref. 1; AAA34324." evidence="5" ref="1">
    <original>F</original>
    <variation>V</variation>
    <location>
        <position position="236"/>
    </location>
</feature>
<feature type="sequence conflict" description="In Ref. 1; AAA34324." evidence="5" ref="1">
    <original>E</original>
    <variation>V</variation>
    <location>
        <position position="283"/>
    </location>
</feature>
<comment type="function">
    <text>Guanine nucleotide-binding proteins (G proteins) are involved as modulators or transducers in various transmembrane signaling systems. Involved in the mating pathway.</text>
</comment>
<comment type="cofactor">
    <cofactor evidence="3">
        <name>Mg(2+)</name>
        <dbReference type="ChEBI" id="CHEBI:18420"/>
    </cofactor>
</comment>
<comment type="subunit">
    <text>G proteins are composed of 3 units; alpha, beta and gamma. The alpha chain contains the guanine nucleotide binding site.</text>
</comment>
<comment type="similarity">
    <text evidence="5">Belongs to the G-alpha family. G(q) subfamily.</text>
</comment>
<reference key="1">
    <citation type="journal article" date="1992" name="Mol. Cell. Biol.">
        <title>A G-protein alpha subunit from asexual Candida albicans functions in the mating signal transduction pathway of Saccharomyces cerevisiae and is regulated by the a1-alpha 2 repressor.</title>
        <authorList>
            <person name="Sadhu C."/>
            <person name="Hoekstra D."/>
            <person name="McEachern M.J."/>
            <person name="Reed S.I."/>
            <person name="Hicks J.B."/>
        </authorList>
    </citation>
    <scope>NUCLEOTIDE SEQUENCE [GENOMIC DNA]</scope>
    <source>
        <strain>WO-1</strain>
    </source>
</reference>
<reference key="2">
    <citation type="journal article" date="2009" name="Nature">
        <title>Evolution of pathogenicity and sexual reproduction in eight Candida genomes.</title>
        <authorList>
            <person name="Butler G."/>
            <person name="Rasmussen M.D."/>
            <person name="Lin M.F."/>
            <person name="Santos M.A.S."/>
            <person name="Sakthikumar S."/>
            <person name="Munro C.A."/>
            <person name="Rheinbay E."/>
            <person name="Grabherr M."/>
            <person name="Forche A."/>
            <person name="Reedy J.L."/>
            <person name="Agrafioti I."/>
            <person name="Arnaud M.B."/>
            <person name="Bates S."/>
            <person name="Brown A.J.P."/>
            <person name="Brunke S."/>
            <person name="Costanzo M.C."/>
            <person name="Fitzpatrick D.A."/>
            <person name="de Groot P.W.J."/>
            <person name="Harris D."/>
            <person name="Hoyer L.L."/>
            <person name="Hube B."/>
            <person name="Klis F.M."/>
            <person name="Kodira C."/>
            <person name="Lennard N."/>
            <person name="Logue M.E."/>
            <person name="Martin R."/>
            <person name="Neiman A.M."/>
            <person name="Nikolaou E."/>
            <person name="Quail M.A."/>
            <person name="Quinn J."/>
            <person name="Santos M.C."/>
            <person name="Schmitzberger F.F."/>
            <person name="Sherlock G."/>
            <person name="Shah P."/>
            <person name="Silverstein K.A.T."/>
            <person name="Skrzypek M.S."/>
            <person name="Soll D."/>
            <person name="Staggs R."/>
            <person name="Stansfield I."/>
            <person name="Stumpf M.P.H."/>
            <person name="Sudbery P.E."/>
            <person name="Srikantha T."/>
            <person name="Zeng Q."/>
            <person name="Berman J."/>
            <person name="Berriman M."/>
            <person name="Heitman J."/>
            <person name="Gow N.A.R."/>
            <person name="Lorenz M.C."/>
            <person name="Birren B.W."/>
            <person name="Kellis M."/>
            <person name="Cuomo C.A."/>
        </authorList>
    </citation>
    <scope>NUCLEOTIDE SEQUENCE [LARGE SCALE GENOMIC DNA]</scope>
    <source>
        <strain>WO-1</strain>
    </source>
</reference>
<protein>
    <recommendedName>
        <fullName>Guanine nucleotide-binding protein subunit alpha</fullName>
    </recommendedName>
</protein>
<proteinExistence type="inferred from homology"/>
<evidence type="ECO:0000250" key="1"/>
<evidence type="ECO:0000250" key="2">
    <source>
        <dbReference type="UniProtKB" id="P08539"/>
    </source>
</evidence>
<evidence type="ECO:0000250" key="3">
    <source>
        <dbReference type="UniProtKB" id="P18064"/>
    </source>
</evidence>
<evidence type="ECO:0000255" key="4">
    <source>
        <dbReference type="PROSITE-ProRule" id="PRU01230"/>
    </source>
</evidence>
<evidence type="ECO:0000305" key="5"/>